<accession>A1SL80</accession>
<dbReference type="EC" id="2.4.1.227" evidence="1"/>
<dbReference type="EMBL" id="CP000509">
    <property type="protein sequence ID" value="ABL82565.1"/>
    <property type="molecule type" value="Genomic_DNA"/>
</dbReference>
<dbReference type="RefSeq" id="WP_011756499.1">
    <property type="nucleotide sequence ID" value="NC_008699.1"/>
</dbReference>
<dbReference type="SMR" id="A1SL80"/>
<dbReference type="STRING" id="196162.Noca_3063"/>
<dbReference type="CAZy" id="GT28">
    <property type="family name" value="Glycosyltransferase Family 28"/>
</dbReference>
<dbReference type="KEGG" id="nca:Noca_3063"/>
<dbReference type="eggNOG" id="COG0707">
    <property type="taxonomic scope" value="Bacteria"/>
</dbReference>
<dbReference type="HOGENOM" id="CLU_037404_1_0_11"/>
<dbReference type="OrthoDB" id="9808936at2"/>
<dbReference type="UniPathway" id="UPA00219"/>
<dbReference type="Proteomes" id="UP000000640">
    <property type="component" value="Chromosome"/>
</dbReference>
<dbReference type="GO" id="GO:0005886">
    <property type="term" value="C:plasma membrane"/>
    <property type="evidence" value="ECO:0007669"/>
    <property type="project" value="UniProtKB-SubCell"/>
</dbReference>
<dbReference type="GO" id="GO:0051991">
    <property type="term" value="F:UDP-N-acetyl-D-glucosamine:N-acetylmuramoyl-L-alanyl-D-glutamyl-meso-2,6-diaminopimelyl-D-alanyl-D-alanine-diphosphoundecaprenol 4-beta-N-acetylglucosaminlytransferase activity"/>
    <property type="evidence" value="ECO:0007669"/>
    <property type="project" value="RHEA"/>
</dbReference>
<dbReference type="GO" id="GO:0050511">
    <property type="term" value="F:undecaprenyldiphospho-muramoylpentapeptide beta-N-acetylglucosaminyltransferase activity"/>
    <property type="evidence" value="ECO:0007669"/>
    <property type="project" value="UniProtKB-UniRule"/>
</dbReference>
<dbReference type="GO" id="GO:0005975">
    <property type="term" value="P:carbohydrate metabolic process"/>
    <property type="evidence" value="ECO:0007669"/>
    <property type="project" value="InterPro"/>
</dbReference>
<dbReference type="GO" id="GO:0051301">
    <property type="term" value="P:cell division"/>
    <property type="evidence" value="ECO:0007669"/>
    <property type="project" value="UniProtKB-KW"/>
</dbReference>
<dbReference type="GO" id="GO:0071555">
    <property type="term" value="P:cell wall organization"/>
    <property type="evidence" value="ECO:0007669"/>
    <property type="project" value="UniProtKB-KW"/>
</dbReference>
<dbReference type="GO" id="GO:0030259">
    <property type="term" value="P:lipid glycosylation"/>
    <property type="evidence" value="ECO:0007669"/>
    <property type="project" value="UniProtKB-UniRule"/>
</dbReference>
<dbReference type="GO" id="GO:0009252">
    <property type="term" value="P:peptidoglycan biosynthetic process"/>
    <property type="evidence" value="ECO:0007669"/>
    <property type="project" value="UniProtKB-UniRule"/>
</dbReference>
<dbReference type="GO" id="GO:0008360">
    <property type="term" value="P:regulation of cell shape"/>
    <property type="evidence" value="ECO:0007669"/>
    <property type="project" value="UniProtKB-KW"/>
</dbReference>
<dbReference type="CDD" id="cd03785">
    <property type="entry name" value="GT28_MurG"/>
    <property type="match status" value="1"/>
</dbReference>
<dbReference type="Gene3D" id="3.40.50.2000">
    <property type="entry name" value="Glycogen Phosphorylase B"/>
    <property type="match status" value="2"/>
</dbReference>
<dbReference type="HAMAP" id="MF_00033">
    <property type="entry name" value="MurG"/>
    <property type="match status" value="1"/>
</dbReference>
<dbReference type="InterPro" id="IPR006009">
    <property type="entry name" value="GlcNAc_MurG"/>
</dbReference>
<dbReference type="InterPro" id="IPR007235">
    <property type="entry name" value="Glyco_trans_28_C"/>
</dbReference>
<dbReference type="InterPro" id="IPR004276">
    <property type="entry name" value="GlycoTrans_28_N"/>
</dbReference>
<dbReference type="NCBIfam" id="TIGR01133">
    <property type="entry name" value="murG"/>
    <property type="match status" value="1"/>
</dbReference>
<dbReference type="PANTHER" id="PTHR21015:SF22">
    <property type="entry name" value="GLYCOSYLTRANSFERASE"/>
    <property type="match status" value="1"/>
</dbReference>
<dbReference type="PANTHER" id="PTHR21015">
    <property type="entry name" value="UDP-N-ACETYLGLUCOSAMINE--N-ACETYLMURAMYL-(PENTAPEPTIDE) PYROPHOSPHORYL-UNDECAPRENOL N-ACETYLGLUCOSAMINE TRANSFERASE 1"/>
    <property type="match status" value="1"/>
</dbReference>
<dbReference type="Pfam" id="PF04101">
    <property type="entry name" value="Glyco_tran_28_C"/>
    <property type="match status" value="1"/>
</dbReference>
<dbReference type="Pfam" id="PF03033">
    <property type="entry name" value="Glyco_transf_28"/>
    <property type="match status" value="1"/>
</dbReference>
<dbReference type="SUPFAM" id="SSF53756">
    <property type="entry name" value="UDP-Glycosyltransferase/glycogen phosphorylase"/>
    <property type="match status" value="1"/>
</dbReference>
<evidence type="ECO:0000255" key="1">
    <source>
        <dbReference type="HAMAP-Rule" id="MF_00033"/>
    </source>
</evidence>
<gene>
    <name evidence="1" type="primary">murG</name>
    <name type="ordered locus">Noca_3063</name>
</gene>
<keyword id="KW-0131">Cell cycle</keyword>
<keyword id="KW-0132">Cell division</keyword>
<keyword id="KW-1003">Cell membrane</keyword>
<keyword id="KW-0133">Cell shape</keyword>
<keyword id="KW-0961">Cell wall biogenesis/degradation</keyword>
<keyword id="KW-0328">Glycosyltransferase</keyword>
<keyword id="KW-0472">Membrane</keyword>
<keyword id="KW-0573">Peptidoglycan synthesis</keyword>
<keyword id="KW-1185">Reference proteome</keyword>
<keyword id="KW-0808">Transferase</keyword>
<protein>
    <recommendedName>
        <fullName evidence="1">UDP-N-acetylglucosamine--N-acetylmuramyl-(pentapeptide) pyrophosphoryl-undecaprenol N-acetylglucosamine transferase</fullName>
        <ecNumber evidence="1">2.4.1.227</ecNumber>
    </recommendedName>
    <alternativeName>
        <fullName evidence="1">Undecaprenyl-PP-MurNAc-pentapeptide-UDPGlcNAc GlcNAc transferase</fullName>
    </alternativeName>
</protein>
<name>MURG_NOCSJ</name>
<feature type="chain" id="PRO_1000002674" description="UDP-N-acetylglucosamine--N-acetylmuramyl-(pentapeptide) pyrophosphoryl-undecaprenol N-acetylglucosamine transferase">
    <location>
        <begin position="1"/>
        <end position="365"/>
    </location>
</feature>
<feature type="binding site" evidence="1">
    <location>
        <begin position="10"/>
        <end position="12"/>
    </location>
    <ligand>
        <name>UDP-N-acetyl-alpha-D-glucosamine</name>
        <dbReference type="ChEBI" id="CHEBI:57705"/>
    </ligand>
</feature>
<feature type="binding site" evidence="1">
    <location>
        <position position="124"/>
    </location>
    <ligand>
        <name>UDP-N-acetyl-alpha-D-glucosamine</name>
        <dbReference type="ChEBI" id="CHEBI:57705"/>
    </ligand>
</feature>
<feature type="binding site" evidence="1">
    <location>
        <position position="161"/>
    </location>
    <ligand>
        <name>UDP-N-acetyl-alpha-D-glucosamine</name>
        <dbReference type="ChEBI" id="CHEBI:57705"/>
    </ligand>
</feature>
<feature type="binding site" evidence="1">
    <location>
        <position position="195"/>
    </location>
    <ligand>
        <name>UDP-N-acetyl-alpha-D-glucosamine</name>
        <dbReference type="ChEBI" id="CHEBI:57705"/>
    </ligand>
</feature>
<feature type="binding site" evidence="1">
    <location>
        <position position="248"/>
    </location>
    <ligand>
        <name>UDP-N-acetyl-alpha-D-glucosamine</name>
        <dbReference type="ChEBI" id="CHEBI:57705"/>
    </ligand>
</feature>
<feature type="binding site" evidence="1">
    <location>
        <position position="292"/>
    </location>
    <ligand>
        <name>UDP-N-acetyl-alpha-D-glucosamine</name>
        <dbReference type="ChEBI" id="CHEBI:57705"/>
    </ligand>
</feature>
<organism>
    <name type="scientific">Nocardioides sp. (strain ATCC BAA-499 / JS614)</name>
    <dbReference type="NCBI Taxonomy" id="196162"/>
    <lineage>
        <taxon>Bacteria</taxon>
        <taxon>Bacillati</taxon>
        <taxon>Actinomycetota</taxon>
        <taxon>Actinomycetes</taxon>
        <taxon>Propionibacteriales</taxon>
        <taxon>Nocardioidaceae</taxon>
        <taxon>Nocardioides</taxon>
    </lineage>
</organism>
<sequence>MRVLLAGGGTAGHTSPLLATADALRRLEPDVEITCLGTPRGLENKVVPEAGYPLELIPPVPLPRRPGADLLKVPFRLRAAVRATHAVLDRVRPDVVVGYGGYVSMPAYVATRKRGIPLVVHEQNTVPGLANRAGARFAQRVAVSFPDTPLRNAEYVGLPIRPMISGLDRAARRAEARAFFGLDPDRPTLLVTGGSQGARRLNQAVSAAAGALAATGVQVLHAQGKHGGADPQPGAEETGVPYVVVEYIDRMDLAYAAADLVICRAGANSVTEAAAVGLPAVFVPLPIGNGEQERNARPVIDAGGGILVKDADLTTDWVVGTVPPLVADAERLAAMGAAAAALIPRDADERLARIVLELGLGSSAR</sequence>
<comment type="function">
    <text evidence="1">Cell wall formation. Catalyzes the transfer of a GlcNAc subunit on undecaprenyl-pyrophosphoryl-MurNAc-pentapeptide (lipid intermediate I) to form undecaprenyl-pyrophosphoryl-MurNAc-(pentapeptide)GlcNAc (lipid intermediate II).</text>
</comment>
<comment type="catalytic activity">
    <reaction evidence="1">
        <text>di-trans,octa-cis-undecaprenyl diphospho-N-acetyl-alpha-D-muramoyl-L-alanyl-D-glutamyl-meso-2,6-diaminopimeloyl-D-alanyl-D-alanine + UDP-N-acetyl-alpha-D-glucosamine = di-trans,octa-cis-undecaprenyl diphospho-[N-acetyl-alpha-D-glucosaminyl-(1-&gt;4)]-N-acetyl-alpha-D-muramoyl-L-alanyl-D-glutamyl-meso-2,6-diaminopimeloyl-D-alanyl-D-alanine + UDP + H(+)</text>
        <dbReference type="Rhea" id="RHEA:31227"/>
        <dbReference type="ChEBI" id="CHEBI:15378"/>
        <dbReference type="ChEBI" id="CHEBI:57705"/>
        <dbReference type="ChEBI" id="CHEBI:58223"/>
        <dbReference type="ChEBI" id="CHEBI:61387"/>
        <dbReference type="ChEBI" id="CHEBI:61388"/>
        <dbReference type="EC" id="2.4.1.227"/>
    </reaction>
</comment>
<comment type="pathway">
    <text evidence="1">Cell wall biogenesis; peptidoglycan biosynthesis.</text>
</comment>
<comment type="subcellular location">
    <subcellularLocation>
        <location evidence="1">Cell membrane</location>
        <topology evidence="1">Peripheral membrane protein</topology>
        <orientation evidence="1">Cytoplasmic side</orientation>
    </subcellularLocation>
</comment>
<comment type="similarity">
    <text evidence="1">Belongs to the glycosyltransferase 28 family. MurG subfamily.</text>
</comment>
<reference key="1">
    <citation type="submission" date="2006-12" db="EMBL/GenBank/DDBJ databases">
        <title>Complete sequence of chromosome 1 of Nocardioides sp. JS614.</title>
        <authorList>
            <person name="Copeland A."/>
            <person name="Lucas S."/>
            <person name="Lapidus A."/>
            <person name="Barry K."/>
            <person name="Detter J.C."/>
            <person name="Glavina del Rio T."/>
            <person name="Hammon N."/>
            <person name="Israni S."/>
            <person name="Dalin E."/>
            <person name="Tice H."/>
            <person name="Pitluck S."/>
            <person name="Thompson L.S."/>
            <person name="Brettin T."/>
            <person name="Bruce D."/>
            <person name="Han C."/>
            <person name="Tapia R."/>
            <person name="Schmutz J."/>
            <person name="Larimer F."/>
            <person name="Land M."/>
            <person name="Hauser L."/>
            <person name="Kyrpides N."/>
            <person name="Kim E."/>
            <person name="Mattes T."/>
            <person name="Gossett J."/>
            <person name="Richardson P."/>
        </authorList>
    </citation>
    <scope>NUCLEOTIDE SEQUENCE [LARGE SCALE GENOMIC DNA]</scope>
    <source>
        <strain>ATCC BAA-499 / JS614</strain>
    </source>
</reference>
<proteinExistence type="inferred from homology"/>